<proteinExistence type="inferred from homology"/>
<accession>P47193</accession>
<accession>Q5D065</accession>
<comment type="function">
    <text evidence="2 3 4">Involved in the targeting and/or fusion of transport vesicles to their target membrane (By similarity). Major SNARE protein of synaptic vesicles which mediates fusion of synaptic vesicles to release neurotransmitters. Essential for fast vesicular exocytosis and activity-dependent neurotransmitter release as well as fast endocytosis that mediates rapid reuse of synaptic vesicles (By similarity).</text>
</comment>
<comment type="subcellular location">
    <subcellularLocation>
        <location evidence="2">Cytoplasmic vesicle</location>
        <location evidence="2">Secretory vesicle</location>
        <location evidence="2">Synaptic vesicle membrane</location>
        <topology evidence="5">Single-pass type IV membrane protein</topology>
    </subcellularLocation>
    <subcellularLocation>
        <location evidence="4">Cell membrane</location>
    </subcellularLocation>
</comment>
<comment type="similarity">
    <text evidence="8">Belongs to the synaptobrevin family.</text>
</comment>
<organism>
    <name type="scientific">Xenopus laevis</name>
    <name type="common">African clawed frog</name>
    <dbReference type="NCBI Taxonomy" id="8355"/>
    <lineage>
        <taxon>Eukaryota</taxon>
        <taxon>Metazoa</taxon>
        <taxon>Chordata</taxon>
        <taxon>Craniata</taxon>
        <taxon>Vertebrata</taxon>
        <taxon>Euteleostomi</taxon>
        <taxon>Amphibia</taxon>
        <taxon>Batrachia</taxon>
        <taxon>Anura</taxon>
        <taxon>Pipoidea</taxon>
        <taxon>Pipidae</taxon>
        <taxon>Xenopodinae</taxon>
        <taxon>Xenopus</taxon>
        <taxon>Xenopus</taxon>
    </lineage>
</organism>
<keyword id="KW-0007">Acetylation</keyword>
<keyword id="KW-1003">Cell membrane</keyword>
<keyword id="KW-0175">Coiled coil</keyword>
<keyword id="KW-0968">Cytoplasmic vesicle</keyword>
<keyword id="KW-0472">Membrane</keyword>
<keyword id="KW-1185">Reference proteome</keyword>
<keyword id="KW-0770">Synapse</keyword>
<keyword id="KW-0812">Transmembrane</keyword>
<keyword id="KW-1133">Transmembrane helix</keyword>
<evidence type="ECO:0000250" key="1"/>
<evidence type="ECO:0000250" key="2">
    <source>
        <dbReference type="UniProtKB" id="P63027"/>
    </source>
</evidence>
<evidence type="ECO:0000250" key="3">
    <source>
        <dbReference type="UniProtKB" id="P63044"/>
    </source>
</evidence>
<evidence type="ECO:0000250" key="4">
    <source>
        <dbReference type="UniProtKB" id="P63045"/>
    </source>
</evidence>
<evidence type="ECO:0000255" key="5"/>
<evidence type="ECO:0000255" key="6">
    <source>
        <dbReference type="PROSITE-ProRule" id="PRU00290"/>
    </source>
</evidence>
<evidence type="ECO:0000256" key="7">
    <source>
        <dbReference type="SAM" id="MobiDB-lite"/>
    </source>
</evidence>
<evidence type="ECO:0000305" key="8"/>
<reference key="1">
    <citation type="submission" date="1997-11" db="EMBL/GenBank/DDBJ databases">
        <authorList>
            <person name="Wang X.-H."/>
            <person name="Poo M.-M."/>
        </authorList>
    </citation>
    <scope>NUCLEOTIDE SEQUENCE [MRNA]</scope>
</reference>
<reference key="2">
    <citation type="submission" date="2003-10" db="EMBL/GenBank/DDBJ databases">
        <authorList>
            <consortium name="NIH - Xenopus Gene Collection (XGC) project"/>
        </authorList>
    </citation>
    <scope>NUCLEOTIDE SEQUENCE [LARGE SCALE MRNA]</scope>
    <source>
        <tissue>Embryo</tissue>
        <tissue>Testis</tissue>
    </source>
</reference>
<reference key="3">
    <citation type="journal article" date="1995" name="Development">
        <title>Dorsal-ventral patterning and differentiation of noggin-induced neural tissue in the absence of mesoderm.</title>
        <authorList>
            <person name="Knecht A.K."/>
            <person name="Good P.J."/>
            <person name="Dawid I.B."/>
            <person name="Harland R.M."/>
        </authorList>
    </citation>
    <scope>NUCLEOTIDE SEQUENCE [MRNA] OF 33-114</scope>
    <source>
        <tissue>Embryo</tissue>
    </source>
</reference>
<feature type="initiator methionine" description="Removed" evidence="1">
    <location>
        <position position="1"/>
    </location>
</feature>
<feature type="chain" id="PRO_0000206727" description="Vesicle-associated membrane protein 2">
    <location>
        <begin position="2"/>
        <end position="114"/>
    </location>
</feature>
<feature type="topological domain" description="Cytoplasmic" evidence="5">
    <location>
        <begin position="2"/>
        <end position="92"/>
    </location>
</feature>
<feature type="transmembrane region" description="Helical; Anchor for type IV membrane protein" evidence="5">
    <location>
        <begin position="93"/>
        <end position="111"/>
    </location>
</feature>
<feature type="topological domain" description="Vesicular" evidence="5">
    <location>
        <begin position="112"/>
        <end position="114"/>
    </location>
</feature>
<feature type="domain" description="v-SNARE coiled-coil homology" evidence="6">
    <location>
        <begin position="29"/>
        <end position="89"/>
    </location>
</feature>
<feature type="region of interest" description="Disordered" evidence="7">
    <location>
        <begin position="1"/>
        <end position="31"/>
    </location>
</feature>
<feature type="compositionally biased region" description="Pro residues" evidence="7">
    <location>
        <begin position="1"/>
        <end position="11"/>
    </location>
</feature>
<feature type="modified residue" description="N-acetylserine" evidence="1">
    <location>
        <position position="2"/>
    </location>
</feature>
<protein>
    <recommendedName>
        <fullName>Vesicle-associated membrane protein 2</fullName>
        <shortName>VAMP-2</shortName>
    </recommendedName>
    <alternativeName>
        <fullName>SYBII</fullName>
    </alternativeName>
    <alternativeName>
        <fullName>Synaptobrevin-2</fullName>
    </alternativeName>
</protein>
<sequence>MSAPAAGPPAAAPGDGAPQGPPNLTSNRRLQQTQAQVDEVVDIMRVNVDKVLERDTKLSELDDRADALQAGASQFETSAAKLKRKYWWKNMKMMIIMGVICAIILIIIIVYFST</sequence>
<name>VAMP2_XENLA</name>
<gene>
    <name type="primary">vamp2</name>
</gene>
<dbReference type="EMBL" id="AF035017">
    <property type="protein sequence ID" value="AAB88138.1"/>
    <property type="molecule type" value="mRNA"/>
</dbReference>
<dbReference type="EMBL" id="BC060344">
    <property type="protein sequence ID" value="AAH60344.1"/>
    <property type="molecule type" value="mRNA"/>
</dbReference>
<dbReference type="EMBL" id="BC123114">
    <property type="protein sequence ID" value="AAI23115.1"/>
    <property type="molecule type" value="mRNA"/>
</dbReference>
<dbReference type="EMBL" id="U16801">
    <property type="protein sequence ID" value="AAA81376.1"/>
    <property type="molecule type" value="mRNA"/>
</dbReference>
<dbReference type="RefSeq" id="NP_001080944.1">
    <property type="nucleotide sequence ID" value="NM_001087475.1"/>
</dbReference>
<dbReference type="BMRB" id="P47193"/>
<dbReference type="SMR" id="P47193"/>
<dbReference type="DNASU" id="394287"/>
<dbReference type="GeneID" id="394287"/>
<dbReference type="KEGG" id="xla:394287"/>
<dbReference type="AGR" id="Xenbase:XB-GENE-5788238"/>
<dbReference type="CTD" id="394287"/>
<dbReference type="Xenbase" id="XB-GENE-5788238">
    <property type="gene designation" value="vamp2.L"/>
</dbReference>
<dbReference type="OrthoDB" id="10042941at2759"/>
<dbReference type="Proteomes" id="UP000186698">
    <property type="component" value="Chromosome 3L"/>
</dbReference>
<dbReference type="Bgee" id="394287">
    <property type="expression patterns" value="Expressed in brain and 20 other cell types or tissues"/>
</dbReference>
<dbReference type="GO" id="GO:0005886">
    <property type="term" value="C:plasma membrane"/>
    <property type="evidence" value="ECO:0000318"/>
    <property type="project" value="GO_Central"/>
</dbReference>
<dbReference type="GO" id="GO:0031201">
    <property type="term" value="C:SNARE complex"/>
    <property type="evidence" value="ECO:0000318"/>
    <property type="project" value="GO_Central"/>
</dbReference>
<dbReference type="GO" id="GO:0030672">
    <property type="term" value="C:synaptic vesicle membrane"/>
    <property type="evidence" value="ECO:0007669"/>
    <property type="project" value="UniProtKB-SubCell"/>
</dbReference>
<dbReference type="GO" id="GO:0005484">
    <property type="term" value="F:SNAP receptor activity"/>
    <property type="evidence" value="ECO:0000318"/>
    <property type="project" value="GO_Central"/>
</dbReference>
<dbReference type="GO" id="GO:0017075">
    <property type="term" value="F:syntaxin-1 binding"/>
    <property type="evidence" value="ECO:0000318"/>
    <property type="project" value="GO_Central"/>
</dbReference>
<dbReference type="GO" id="GO:0035493">
    <property type="term" value="P:SNARE complex assembly"/>
    <property type="evidence" value="ECO:0000318"/>
    <property type="project" value="GO_Central"/>
</dbReference>
<dbReference type="GO" id="GO:0048488">
    <property type="term" value="P:synaptic vesicle endocytosis"/>
    <property type="evidence" value="ECO:0000250"/>
    <property type="project" value="UniProtKB"/>
</dbReference>
<dbReference type="GO" id="GO:0016079">
    <property type="term" value="P:synaptic vesicle exocytosis"/>
    <property type="evidence" value="ECO:0000250"/>
    <property type="project" value="UniProtKB"/>
</dbReference>
<dbReference type="GO" id="GO:0006906">
    <property type="term" value="P:vesicle fusion"/>
    <property type="evidence" value="ECO:0000250"/>
    <property type="project" value="UniProtKB"/>
</dbReference>
<dbReference type="CDD" id="cd15870">
    <property type="entry name" value="R-SNARE_VAMP2"/>
    <property type="match status" value="1"/>
</dbReference>
<dbReference type="FunFam" id="1.20.5.110:FF:000013">
    <property type="entry name" value="Vesicle-associated membrane protein 2"/>
    <property type="match status" value="1"/>
</dbReference>
<dbReference type="Gene3D" id="1.20.5.110">
    <property type="match status" value="1"/>
</dbReference>
<dbReference type="InterPro" id="IPR001388">
    <property type="entry name" value="Synaptobrevin-like"/>
</dbReference>
<dbReference type="InterPro" id="IPR016444">
    <property type="entry name" value="Synaptobrevin/VAMP"/>
</dbReference>
<dbReference type="InterPro" id="IPR042855">
    <property type="entry name" value="V_SNARE_CC"/>
</dbReference>
<dbReference type="PANTHER" id="PTHR45701">
    <property type="entry name" value="SYNAPTOBREVIN FAMILY MEMBER"/>
    <property type="match status" value="1"/>
</dbReference>
<dbReference type="Pfam" id="PF00957">
    <property type="entry name" value="Synaptobrevin"/>
    <property type="match status" value="1"/>
</dbReference>
<dbReference type="PIRSF" id="PIRSF005409">
    <property type="entry name" value="Synaptobrevin_euk"/>
    <property type="match status" value="1"/>
</dbReference>
<dbReference type="PRINTS" id="PR00219">
    <property type="entry name" value="SYNAPTOBREVN"/>
</dbReference>
<dbReference type="SUPFAM" id="SSF58038">
    <property type="entry name" value="SNARE fusion complex"/>
    <property type="match status" value="1"/>
</dbReference>
<dbReference type="PROSITE" id="PS00417">
    <property type="entry name" value="SYNAPTOBREVIN"/>
    <property type="match status" value="1"/>
</dbReference>
<dbReference type="PROSITE" id="PS50892">
    <property type="entry name" value="V_SNARE"/>
    <property type="match status" value="1"/>
</dbReference>